<sequence>MIPDVSQALAWLEKHPQALKGIQRGLERETLRVNADGTLATTGHPEALGSALTHKWITTDFAEALLEFITPVDGDIEHMLTFMRDLHRYTARNMGDERMWPLSMPCYIAEGQDIELAQYGTSNTGRFKTLYREGLKNRYGALMQTISGVHYNFSLPMAFWQAKCGDISGADAKEKISAGYFRVIRNYYRFGWVIPYLFGASPAICSSFLQGKPTSLPFEKTECGMYYLPYATSLRLSDLGYTNKSQSNLGITFNDLYEYVAGLKQAIKTPSEEYAKIGIEKDGKRLQINSNVLQIENELYAPIRPKRVTRSGESPSDALLRGGIEYIEVRSLDINPFSPIGVDEQQVRFLDLFMVWCALADAPEMSSSELACTRVNWNRVILEGRKPGLTLGIGCETAQFPLPQVGKDLFRDLKRVAQTLDSINGGEAYQKVCDELVACFDNPDLTFSARILRSMIDTGIGGTGKAFAEAYRNLLREEPLEILREEDFVAEREASERRQQEMEAADTEPFAVWLEKHA</sequence>
<comment type="catalytic activity">
    <reaction evidence="1">
        <text>L-cysteine + L-glutamate + ATP = gamma-L-glutamyl-L-cysteine + ADP + phosphate + H(+)</text>
        <dbReference type="Rhea" id="RHEA:13285"/>
        <dbReference type="ChEBI" id="CHEBI:15378"/>
        <dbReference type="ChEBI" id="CHEBI:29985"/>
        <dbReference type="ChEBI" id="CHEBI:30616"/>
        <dbReference type="ChEBI" id="CHEBI:35235"/>
        <dbReference type="ChEBI" id="CHEBI:43474"/>
        <dbReference type="ChEBI" id="CHEBI:58173"/>
        <dbReference type="ChEBI" id="CHEBI:456216"/>
        <dbReference type="EC" id="6.3.2.2"/>
    </reaction>
</comment>
<comment type="pathway">
    <text evidence="1">Sulfur metabolism; glutathione biosynthesis; glutathione from L-cysteine and L-glutamate: step 1/2.</text>
</comment>
<comment type="similarity">
    <text evidence="1">Belongs to the glutamate--cysteine ligase type 1 family. Type 1 subfamily.</text>
</comment>
<feature type="chain" id="PRO_1000082358" description="Glutamate--cysteine ligase">
    <location>
        <begin position="1"/>
        <end position="518"/>
    </location>
</feature>
<protein>
    <recommendedName>
        <fullName evidence="1">Glutamate--cysteine ligase</fullName>
        <ecNumber evidence="1">6.3.2.2</ecNumber>
    </recommendedName>
    <alternativeName>
        <fullName evidence="1">Gamma-ECS</fullName>
        <shortName evidence="1">GCS</shortName>
    </alternativeName>
    <alternativeName>
        <fullName evidence="1">Gamma-glutamylcysteine synthetase</fullName>
    </alternativeName>
</protein>
<reference key="1">
    <citation type="submission" date="2008-02" db="EMBL/GenBank/DDBJ databases">
        <title>Complete sequence of Escherichia coli C str. ATCC 8739.</title>
        <authorList>
            <person name="Copeland A."/>
            <person name="Lucas S."/>
            <person name="Lapidus A."/>
            <person name="Glavina del Rio T."/>
            <person name="Dalin E."/>
            <person name="Tice H."/>
            <person name="Bruce D."/>
            <person name="Goodwin L."/>
            <person name="Pitluck S."/>
            <person name="Kiss H."/>
            <person name="Brettin T."/>
            <person name="Detter J.C."/>
            <person name="Han C."/>
            <person name="Kuske C.R."/>
            <person name="Schmutz J."/>
            <person name="Larimer F."/>
            <person name="Land M."/>
            <person name="Hauser L."/>
            <person name="Kyrpides N."/>
            <person name="Mikhailova N."/>
            <person name="Ingram L."/>
            <person name="Richardson P."/>
        </authorList>
    </citation>
    <scope>NUCLEOTIDE SEQUENCE [LARGE SCALE GENOMIC DNA]</scope>
    <source>
        <strain>ATCC 8739 / DSM 1576 / NBRC 3972 / NCIMB 8545 / WDCM 00012 / Crooks</strain>
    </source>
</reference>
<dbReference type="EC" id="6.3.2.2" evidence="1"/>
<dbReference type="EMBL" id="CP000946">
    <property type="protein sequence ID" value="ACA76688.1"/>
    <property type="molecule type" value="Genomic_DNA"/>
</dbReference>
<dbReference type="RefSeq" id="WP_000611804.1">
    <property type="nucleotide sequence ID" value="NZ_MTFT01000026.1"/>
</dbReference>
<dbReference type="SMR" id="B1IUY6"/>
<dbReference type="KEGG" id="ecl:EcolC_1019"/>
<dbReference type="HOGENOM" id="CLU_020728_3_0_6"/>
<dbReference type="UniPathway" id="UPA00142">
    <property type="reaction ID" value="UER00209"/>
</dbReference>
<dbReference type="GO" id="GO:0005829">
    <property type="term" value="C:cytosol"/>
    <property type="evidence" value="ECO:0007669"/>
    <property type="project" value="TreeGrafter"/>
</dbReference>
<dbReference type="GO" id="GO:0005524">
    <property type="term" value="F:ATP binding"/>
    <property type="evidence" value="ECO:0007669"/>
    <property type="project" value="UniProtKB-KW"/>
</dbReference>
<dbReference type="GO" id="GO:0004357">
    <property type="term" value="F:glutamate-cysteine ligase activity"/>
    <property type="evidence" value="ECO:0007669"/>
    <property type="project" value="UniProtKB-UniRule"/>
</dbReference>
<dbReference type="GO" id="GO:0046872">
    <property type="term" value="F:metal ion binding"/>
    <property type="evidence" value="ECO:0007669"/>
    <property type="project" value="TreeGrafter"/>
</dbReference>
<dbReference type="GO" id="GO:0006750">
    <property type="term" value="P:glutathione biosynthetic process"/>
    <property type="evidence" value="ECO:0007669"/>
    <property type="project" value="UniProtKB-UniRule"/>
</dbReference>
<dbReference type="FunFam" id="3.30.590.20:FF:000001">
    <property type="entry name" value="Glutamate--cysteine ligase"/>
    <property type="match status" value="1"/>
</dbReference>
<dbReference type="Gene3D" id="3.30.590.20">
    <property type="match status" value="1"/>
</dbReference>
<dbReference type="HAMAP" id="MF_00578">
    <property type="entry name" value="Glu_cys_ligase"/>
    <property type="match status" value="1"/>
</dbReference>
<dbReference type="InterPro" id="IPR014746">
    <property type="entry name" value="Gln_synth/guanido_kin_cat_dom"/>
</dbReference>
<dbReference type="InterPro" id="IPR007370">
    <property type="entry name" value="Glu_cys_ligase"/>
</dbReference>
<dbReference type="InterPro" id="IPR006334">
    <property type="entry name" value="Glut_cys_ligase"/>
</dbReference>
<dbReference type="NCBIfam" id="TIGR01434">
    <property type="entry name" value="glu_cys_ligase"/>
    <property type="match status" value="1"/>
</dbReference>
<dbReference type="PANTHER" id="PTHR38761">
    <property type="entry name" value="GLUTAMATE--CYSTEINE LIGASE"/>
    <property type="match status" value="1"/>
</dbReference>
<dbReference type="PANTHER" id="PTHR38761:SF1">
    <property type="entry name" value="GLUTAMATE--CYSTEINE LIGASE"/>
    <property type="match status" value="1"/>
</dbReference>
<dbReference type="Pfam" id="PF04262">
    <property type="entry name" value="Glu_cys_ligase"/>
    <property type="match status" value="1"/>
</dbReference>
<dbReference type="SUPFAM" id="SSF55931">
    <property type="entry name" value="Glutamine synthetase/guanido kinase"/>
    <property type="match status" value="1"/>
</dbReference>
<keyword id="KW-0067">ATP-binding</keyword>
<keyword id="KW-0317">Glutathione biosynthesis</keyword>
<keyword id="KW-0436">Ligase</keyword>
<keyword id="KW-0547">Nucleotide-binding</keyword>
<proteinExistence type="inferred from homology"/>
<accession>B1IUY6</accession>
<organism>
    <name type="scientific">Escherichia coli (strain ATCC 8739 / DSM 1576 / NBRC 3972 / NCIMB 8545 / WDCM 00012 / Crooks)</name>
    <dbReference type="NCBI Taxonomy" id="481805"/>
    <lineage>
        <taxon>Bacteria</taxon>
        <taxon>Pseudomonadati</taxon>
        <taxon>Pseudomonadota</taxon>
        <taxon>Gammaproteobacteria</taxon>
        <taxon>Enterobacterales</taxon>
        <taxon>Enterobacteriaceae</taxon>
        <taxon>Escherichia</taxon>
    </lineage>
</organism>
<evidence type="ECO:0000255" key="1">
    <source>
        <dbReference type="HAMAP-Rule" id="MF_00578"/>
    </source>
</evidence>
<gene>
    <name evidence="1" type="primary">gshA</name>
    <name type="ordered locus">EcolC_1019</name>
</gene>
<name>GSH1_ECOLC</name>